<evidence type="ECO:0000255" key="1">
    <source>
        <dbReference type="HAMAP-Rule" id="MF_00577"/>
    </source>
</evidence>
<keyword id="KW-0963">Cytoplasm</keyword>
<keyword id="KW-0369">Histidine metabolism</keyword>
<keyword id="KW-0456">Lyase</keyword>
<keyword id="KW-0520">NAD</keyword>
<gene>
    <name evidence="1" type="primary">hutU</name>
    <name type="ordered locus">Sputw3181_3998</name>
</gene>
<name>HUTU_SHESW</name>
<dbReference type="EC" id="4.2.1.49" evidence="1"/>
<dbReference type="EMBL" id="CP000503">
    <property type="protein sequence ID" value="ABM26802.1"/>
    <property type="molecule type" value="Genomic_DNA"/>
</dbReference>
<dbReference type="RefSeq" id="WP_011791224.1">
    <property type="nucleotide sequence ID" value="NC_008750.1"/>
</dbReference>
<dbReference type="SMR" id="A1RQ57"/>
<dbReference type="KEGG" id="shw:Sputw3181_3998"/>
<dbReference type="HOGENOM" id="CLU_018868_0_1_6"/>
<dbReference type="UniPathway" id="UPA00379">
    <property type="reaction ID" value="UER00550"/>
</dbReference>
<dbReference type="Proteomes" id="UP000002597">
    <property type="component" value="Chromosome"/>
</dbReference>
<dbReference type="GO" id="GO:0005737">
    <property type="term" value="C:cytoplasm"/>
    <property type="evidence" value="ECO:0007669"/>
    <property type="project" value="UniProtKB-SubCell"/>
</dbReference>
<dbReference type="GO" id="GO:0016153">
    <property type="term" value="F:urocanate hydratase activity"/>
    <property type="evidence" value="ECO:0007669"/>
    <property type="project" value="UniProtKB-UniRule"/>
</dbReference>
<dbReference type="GO" id="GO:0019556">
    <property type="term" value="P:L-histidine catabolic process to glutamate and formamide"/>
    <property type="evidence" value="ECO:0007669"/>
    <property type="project" value="UniProtKB-UniPathway"/>
</dbReference>
<dbReference type="GO" id="GO:0019557">
    <property type="term" value="P:L-histidine catabolic process to glutamate and formate"/>
    <property type="evidence" value="ECO:0007669"/>
    <property type="project" value="UniProtKB-UniPathway"/>
</dbReference>
<dbReference type="FunFam" id="3.40.50.10730:FF:000001">
    <property type="entry name" value="Urocanate hydratase"/>
    <property type="match status" value="1"/>
</dbReference>
<dbReference type="Gene3D" id="3.40.50.10730">
    <property type="entry name" value="Urocanase like domains"/>
    <property type="match status" value="1"/>
</dbReference>
<dbReference type="Gene3D" id="3.40.1770.10">
    <property type="entry name" value="Urocanase superfamily"/>
    <property type="match status" value="1"/>
</dbReference>
<dbReference type="HAMAP" id="MF_00577">
    <property type="entry name" value="HutU"/>
    <property type="match status" value="1"/>
</dbReference>
<dbReference type="InterPro" id="IPR055351">
    <property type="entry name" value="Urocanase"/>
</dbReference>
<dbReference type="InterPro" id="IPR023637">
    <property type="entry name" value="Urocanase-like"/>
</dbReference>
<dbReference type="InterPro" id="IPR035401">
    <property type="entry name" value="Urocanase_C"/>
</dbReference>
<dbReference type="InterPro" id="IPR038364">
    <property type="entry name" value="Urocanase_central_sf"/>
</dbReference>
<dbReference type="InterPro" id="IPR023636">
    <property type="entry name" value="Urocanase_CS"/>
</dbReference>
<dbReference type="InterPro" id="IPR035400">
    <property type="entry name" value="Urocanase_N"/>
</dbReference>
<dbReference type="InterPro" id="IPR035085">
    <property type="entry name" value="Urocanase_Rossmann-like"/>
</dbReference>
<dbReference type="InterPro" id="IPR036190">
    <property type="entry name" value="Urocanase_sf"/>
</dbReference>
<dbReference type="NCBIfam" id="TIGR01228">
    <property type="entry name" value="hutU"/>
    <property type="match status" value="1"/>
</dbReference>
<dbReference type="NCBIfam" id="NF003820">
    <property type="entry name" value="PRK05414.1"/>
    <property type="match status" value="1"/>
</dbReference>
<dbReference type="PANTHER" id="PTHR12216">
    <property type="entry name" value="UROCANATE HYDRATASE"/>
    <property type="match status" value="1"/>
</dbReference>
<dbReference type="PANTHER" id="PTHR12216:SF4">
    <property type="entry name" value="UROCANATE HYDRATASE"/>
    <property type="match status" value="1"/>
</dbReference>
<dbReference type="Pfam" id="PF01175">
    <property type="entry name" value="Urocanase"/>
    <property type="match status" value="1"/>
</dbReference>
<dbReference type="Pfam" id="PF17392">
    <property type="entry name" value="Urocanase_C"/>
    <property type="match status" value="1"/>
</dbReference>
<dbReference type="Pfam" id="PF17391">
    <property type="entry name" value="Urocanase_N"/>
    <property type="match status" value="1"/>
</dbReference>
<dbReference type="PIRSF" id="PIRSF001423">
    <property type="entry name" value="Urocanate_hydrat"/>
    <property type="match status" value="1"/>
</dbReference>
<dbReference type="SUPFAM" id="SSF111326">
    <property type="entry name" value="Urocanase"/>
    <property type="match status" value="1"/>
</dbReference>
<dbReference type="PROSITE" id="PS01233">
    <property type="entry name" value="UROCANASE"/>
    <property type="match status" value="1"/>
</dbReference>
<sequence>MDKRHDPSRRIIAPHGTQLSCKSWLTEAPMRMLMNNLHPDVAERPEDLVVYGGIGRAARDWDCYDKIIEVLQRLEDDETLLVQSGKPVGVFRTHADAPRVLIANSNLVPHWANWEHFNELDKLGLAMYGQMTAGSWIYIGTQGIVQGTYETFVSVAKQHFEGISKGKWILTGGLGGMGGAQTLAGTMAGFSVLACEVDETRIDFRLRTRYVDKKATSLDEALAMIEAANQAGKPVSVGLLANAADVFAELVKRGVTPDVVTDQTSAHDPLNGYLPQGWTMAEAAAMRKTDEAGVVKAAKASMAVQVQAMLNLQTAGAATLDYGNNIRQMAFEMGVENAFDFPGFVPAYIRPLFCEGIGPFRWVALSGDPEDIYKTDAKVKELIPDNPHLHNWLDMARERIAFQGLPARICWIGLKDRARLALAFNEMVKNGELSAPVVIGRDHLDSGSVASPNRETESMLDGSDAVSDWPLLNALLNTASGATWVSLHHGGGVGMGFSQHSGVVIVCDGTDAAAKRVGRVLWNDPATGVMRHADAGYEIAKNCAKEQGLDLPMQD</sequence>
<organism>
    <name type="scientific">Shewanella sp. (strain W3-18-1)</name>
    <dbReference type="NCBI Taxonomy" id="351745"/>
    <lineage>
        <taxon>Bacteria</taxon>
        <taxon>Pseudomonadati</taxon>
        <taxon>Pseudomonadota</taxon>
        <taxon>Gammaproteobacteria</taxon>
        <taxon>Alteromonadales</taxon>
        <taxon>Shewanellaceae</taxon>
        <taxon>Shewanella</taxon>
    </lineage>
</organism>
<protein>
    <recommendedName>
        <fullName evidence="1">Urocanate hydratase</fullName>
        <shortName evidence="1">Urocanase</shortName>
        <ecNumber evidence="1">4.2.1.49</ecNumber>
    </recommendedName>
    <alternativeName>
        <fullName evidence="1">Imidazolonepropionate hydrolase</fullName>
    </alternativeName>
</protein>
<comment type="function">
    <text evidence="1">Catalyzes the conversion of urocanate to 4-imidazolone-5-propionate.</text>
</comment>
<comment type="catalytic activity">
    <reaction evidence="1">
        <text>4-imidazolone-5-propanoate = trans-urocanate + H2O</text>
        <dbReference type="Rhea" id="RHEA:13101"/>
        <dbReference type="ChEBI" id="CHEBI:15377"/>
        <dbReference type="ChEBI" id="CHEBI:17771"/>
        <dbReference type="ChEBI" id="CHEBI:77893"/>
        <dbReference type="EC" id="4.2.1.49"/>
    </reaction>
</comment>
<comment type="cofactor">
    <cofactor evidence="1">
        <name>NAD(+)</name>
        <dbReference type="ChEBI" id="CHEBI:57540"/>
    </cofactor>
    <text evidence="1">Binds 1 NAD(+) per subunit.</text>
</comment>
<comment type="pathway">
    <text evidence="1">Amino-acid degradation; L-histidine degradation into L-glutamate; N-formimidoyl-L-glutamate from L-histidine: step 2/3.</text>
</comment>
<comment type="subcellular location">
    <subcellularLocation>
        <location evidence="1">Cytoplasm</location>
    </subcellularLocation>
</comment>
<comment type="similarity">
    <text evidence="1">Belongs to the urocanase family.</text>
</comment>
<feature type="chain" id="PRO_1000025155" description="Urocanate hydratase">
    <location>
        <begin position="1"/>
        <end position="555"/>
    </location>
</feature>
<feature type="active site" evidence="1">
    <location>
        <position position="410"/>
    </location>
</feature>
<feature type="binding site" evidence="1">
    <location>
        <begin position="52"/>
        <end position="53"/>
    </location>
    <ligand>
        <name>NAD(+)</name>
        <dbReference type="ChEBI" id="CHEBI:57540"/>
    </ligand>
</feature>
<feature type="binding site" evidence="1">
    <location>
        <position position="130"/>
    </location>
    <ligand>
        <name>NAD(+)</name>
        <dbReference type="ChEBI" id="CHEBI:57540"/>
    </ligand>
</feature>
<feature type="binding site" evidence="1">
    <location>
        <begin position="176"/>
        <end position="178"/>
    </location>
    <ligand>
        <name>NAD(+)</name>
        <dbReference type="ChEBI" id="CHEBI:57540"/>
    </ligand>
</feature>
<feature type="binding site" evidence="1">
    <location>
        <position position="196"/>
    </location>
    <ligand>
        <name>NAD(+)</name>
        <dbReference type="ChEBI" id="CHEBI:57540"/>
    </ligand>
</feature>
<feature type="binding site" evidence="1">
    <location>
        <position position="201"/>
    </location>
    <ligand>
        <name>NAD(+)</name>
        <dbReference type="ChEBI" id="CHEBI:57540"/>
    </ligand>
</feature>
<feature type="binding site" evidence="1">
    <location>
        <begin position="242"/>
        <end position="243"/>
    </location>
    <ligand>
        <name>NAD(+)</name>
        <dbReference type="ChEBI" id="CHEBI:57540"/>
    </ligand>
</feature>
<feature type="binding site" evidence="1">
    <location>
        <begin position="263"/>
        <end position="267"/>
    </location>
    <ligand>
        <name>NAD(+)</name>
        <dbReference type="ChEBI" id="CHEBI:57540"/>
    </ligand>
</feature>
<feature type="binding site" evidence="1">
    <location>
        <begin position="273"/>
        <end position="274"/>
    </location>
    <ligand>
        <name>NAD(+)</name>
        <dbReference type="ChEBI" id="CHEBI:57540"/>
    </ligand>
</feature>
<feature type="binding site" evidence="1">
    <location>
        <position position="322"/>
    </location>
    <ligand>
        <name>NAD(+)</name>
        <dbReference type="ChEBI" id="CHEBI:57540"/>
    </ligand>
</feature>
<feature type="binding site" evidence="1">
    <location>
        <position position="492"/>
    </location>
    <ligand>
        <name>NAD(+)</name>
        <dbReference type="ChEBI" id="CHEBI:57540"/>
    </ligand>
</feature>
<accession>A1RQ57</accession>
<reference key="1">
    <citation type="submission" date="2006-12" db="EMBL/GenBank/DDBJ databases">
        <title>Complete sequence of Shewanella sp. W3-18-1.</title>
        <authorList>
            <consortium name="US DOE Joint Genome Institute"/>
            <person name="Copeland A."/>
            <person name="Lucas S."/>
            <person name="Lapidus A."/>
            <person name="Barry K."/>
            <person name="Detter J.C."/>
            <person name="Glavina del Rio T."/>
            <person name="Hammon N."/>
            <person name="Israni S."/>
            <person name="Dalin E."/>
            <person name="Tice H."/>
            <person name="Pitluck S."/>
            <person name="Chain P."/>
            <person name="Malfatti S."/>
            <person name="Shin M."/>
            <person name="Vergez L."/>
            <person name="Schmutz J."/>
            <person name="Larimer F."/>
            <person name="Land M."/>
            <person name="Hauser L."/>
            <person name="Kyrpides N."/>
            <person name="Lykidis A."/>
            <person name="Tiedje J."/>
            <person name="Richardson P."/>
        </authorList>
    </citation>
    <scope>NUCLEOTIDE SEQUENCE [LARGE SCALE GENOMIC DNA]</scope>
    <source>
        <strain>W3-18-1</strain>
    </source>
</reference>
<proteinExistence type="inferred from homology"/>